<organism>
    <name type="scientific">Zinnia elegans</name>
    <name type="common">Garden zinnia</name>
    <name type="synonym">Zinnia violacea</name>
    <dbReference type="NCBI Taxonomy" id="34245"/>
    <lineage>
        <taxon>Eukaryota</taxon>
        <taxon>Viridiplantae</taxon>
        <taxon>Streptophyta</taxon>
        <taxon>Embryophyta</taxon>
        <taxon>Tracheophyta</taxon>
        <taxon>Spermatophyta</taxon>
        <taxon>Magnoliopsida</taxon>
        <taxon>eudicotyledons</taxon>
        <taxon>Gunneridae</taxon>
        <taxon>Pentapetalae</taxon>
        <taxon>asterids</taxon>
        <taxon>campanulids</taxon>
        <taxon>Asterales</taxon>
        <taxon>Asteraceae</taxon>
        <taxon>Asteroideae</taxon>
        <taxon>Heliantheae alliance</taxon>
        <taxon>Heliantheae</taxon>
        <taxon>Zinnia</taxon>
    </lineage>
</organism>
<protein>
    <recommendedName>
        <fullName>Monocopper oxidase-like protein 1</fullName>
    </recommendedName>
</protein>
<feature type="chain" id="PRO_0000341530" description="Monocopper oxidase-like protein 1">
    <location>
        <begin position="1" status="less than"/>
        <end position="11" status="greater than"/>
    </location>
</feature>
<feature type="unsure residue" description="I or L">
    <location>
        <position position="10"/>
    </location>
</feature>
<feature type="non-terminal residue">
    <location>
        <position position="1"/>
    </location>
</feature>
<feature type="non-terminal residue">
    <location>
        <position position="11"/>
    </location>
</feature>
<proteinExistence type="evidence at protein level"/>
<evidence type="ECO:0000250" key="1">
    <source>
        <dbReference type="UniProtKB" id="Q8VXX5"/>
    </source>
</evidence>
<evidence type="ECO:0000255" key="2"/>
<evidence type="ECO:0000305" key="3"/>
<reference evidence="3" key="1">
    <citation type="submission" date="2007-12" db="UniProtKB">
        <authorList>
            <person name="Gabaldon C."/>
            <person name="Gomez Ros L.V."/>
            <person name="Novo Uzal E."/>
            <person name="Ros Barcelo A."/>
        </authorList>
    </citation>
    <scope>PROTEIN SEQUENCE</scope>
    <source>
        <strain>cv. Envy</strain>
        <tissue>Callus</tissue>
    </source>
</reference>
<comment type="cofactor">
    <cofactor evidence="1">
        <name>Cu cation</name>
        <dbReference type="ChEBI" id="CHEBI:23378"/>
    </cofactor>
</comment>
<comment type="subcellular location">
    <subcellularLocation>
        <location evidence="1">Cell membrane</location>
        <topology evidence="1">Lipid-anchor</topology>
        <topology evidence="1">GPI-anchor</topology>
    </subcellularLocation>
</comment>
<comment type="similarity">
    <text evidence="2">Belongs to the multicopper oxidase family.</text>
</comment>
<accession>P85414</accession>
<name>MCOL1_ZINEL</name>
<keyword id="KW-1003">Cell membrane</keyword>
<keyword id="KW-0186">Copper</keyword>
<keyword id="KW-0903">Direct protein sequencing</keyword>
<keyword id="KW-0325">Glycoprotein</keyword>
<keyword id="KW-0336">GPI-anchor</keyword>
<keyword id="KW-0449">Lipoprotein</keyword>
<keyword id="KW-0472">Membrane</keyword>
<keyword id="KW-0479">Metal-binding</keyword>
<sequence>GSFVNPTTPIR</sequence>
<dbReference type="GO" id="GO:0005886">
    <property type="term" value="C:plasma membrane"/>
    <property type="evidence" value="ECO:0007669"/>
    <property type="project" value="UniProtKB-SubCell"/>
</dbReference>
<dbReference type="GO" id="GO:0098552">
    <property type="term" value="C:side of membrane"/>
    <property type="evidence" value="ECO:0007669"/>
    <property type="project" value="UniProtKB-KW"/>
</dbReference>
<dbReference type="GO" id="GO:0046872">
    <property type="term" value="F:metal ion binding"/>
    <property type="evidence" value="ECO:0007669"/>
    <property type="project" value="UniProtKB-KW"/>
</dbReference>